<name>RL33_AERHH</name>
<keyword id="KW-1185">Reference proteome</keyword>
<keyword id="KW-0687">Ribonucleoprotein</keyword>
<keyword id="KW-0689">Ribosomal protein</keyword>
<reference key="1">
    <citation type="journal article" date="2006" name="J. Bacteriol.">
        <title>Genome sequence of Aeromonas hydrophila ATCC 7966T: jack of all trades.</title>
        <authorList>
            <person name="Seshadri R."/>
            <person name="Joseph S.W."/>
            <person name="Chopra A.K."/>
            <person name="Sha J."/>
            <person name="Shaw J."/>
            <person name="Graf J."/>
            <person name="Haft D.H."/>
            <person name="Wu M."/>
            <person name="Ren Q."/>
            <person name="Rosovitz M.J."/>
            <person name="Madupu R."/>
            <person name="Tallon L."/>
            <person name="Kim M."/>
            <person name="Jin S."/>
            <person name="Vuong H."/>
            <person name="Stine O.C."/>
            <person name="Ali A."/>
            <person name="Horneman A.J."/>
            <person name="Heidelberg J.F."/>
        </authorList>
    </citation>
    <scope>NUCLEOTIDE SEQUENCE [LARGE SCALE GENOMIC DNA]</scope>
    <source>
        <strain>ATCC 7966 / DSM 30187 / BCRC 13018 / CCUG 14551 / JCM 1027 / KCTC 2358 / NCIMB 9240 / NCTC 8049</strain>
    </source>
</reference>
<proteinExistence type="inferred from homology"/>
<dbReference type="EMBL" id="CP000462">
    <property type="protein sequence ID" value="ABK36179.1"/>
    <property type="molecule type" value="Genomic_DNA"/>
</dbReference>
<dbReference type="RefSeq" id="WP_005307500.1">
    <property type="nucleotide sequence ID" value="NC_008570.1"/>
</dbReference>
<dbReference type="RefSeq" id="YP_854695.1">
    <property type="nucleotide sequence ID" value="NC_008570.1"/>
</dbReference>
<dbReference type="SMR" id="A0KEN0"/>
<dbReference type="STRING" id="380703.AHA_0162"/>
<dbReference type="EnsemblBacteria" id="ABK36179">
    <property type="protein sequence ID" value="ABK36179"/>
    <property type="gene ID" value="AHA_0162"/>
</dbReference>
<dbReference type="GeneID" id="92809802"/>
<dbReference type="KEGG" id="aha:AHA_0162"/>
<dbReference type="PATRIC" id="fig|380703.7.peg.152"/>
<dbReference type="eggNOG" id="COG0267">
    <property type="taxonomic scope" value="Bacteria"/>
</dbReference>
<dbReference type="HOGENOM" id="CLU_190949_1_1_6"/>
<dbReference type="OrthoDB" id="21586at2"/>
<dbReference type="PRO" id="PR:A0KEN0"/>
<dbReference type="Proteomes" id="UP000000756">
    <property type="component" value="Chromosome"/>
</dbReference>
<dbReference type="GO" id="GO:0022625">
    <property type="term" value="C:cytosolic large ribosomal subunit"/>
    <property type="evidence" value="ECO:0007669"/>
    <property type="project" value="TreeGrafter"/>
</dbReference>
<dbReference type="GO" id="GO:0003735">
    <property type="term" value="F:structural constituent of ribosome"/>
    <property type="evidence" value="ECO:0007669"/>
    <property type="project" value="InterPro"/>
</dbReference>
<dbReference type="GO" id="GO:0006412">
    <property type="term" value="P:translation"/>
    <property type="evidence" value="ECO:0007669"/>
    <property type="project" value="UniProtKB-UniRule"/>
</dbReference>
<dbReference type="FunFam" id="2.20.28.120:FF:000001">
    <property type="entry name" value="50S ribosomal protein L33"/>
    <property type="match status" value="1"/>
</dbReference>
<dbReference type="Gene3D" id="2.20.28.120">
    <property type="entry name" value="Ribosomal protein L33"/>
    <property type="match status" value="1"/>
</dbReference>
<dbReference type="HAMAP" id="MF_00294">
    <property type="entry name" value="Ribosomal_bL33"/>
    <property type="match status" value="1"/>
</dbReference>
<dbReference type="InterPro" id="IPR001705">
    <property type="entry name" value="Ribosomal_bL33"/>
</dbReference>
<dbReference type="InterPro" id="IPR018264">
    <property type="entry name" value="Ribosomal_bL33_CS"/>
</dbReference>
<dbReference type="InterPro" id="IPR038584">
    <property type="entry name" value="Ribosomal_bL33_sf"/>
</dbReference>
<dbReference type="InterPro" id="IPR011332">
    <property type="entry name" value="Ribosomal_zn-bd"/>
</dbReference>
<dbReference type="NCBIfam" id="NF001860">
    <property type="entry name" value="PRK00595.1"/>
    <property type="match status" value="1"/>
</dbReference>
<dbReference type="NCBIfam" id="TIGR01023">
    <property type="entry name" value="rpmG_bact"/>
    <property type="match status" value="1"/>
</dbReference>
<dbReference type="PANTHER" id="PTHR15238">
    <property type="entry name" value="54S RIBOSOMAL PROTEIN L39, MITOCHONDRIAL"/>
    <property type="match status" value="1"/>
</dbReference>
<dbReference type="PANTHER" id="PTHR15238:SF1">
    <property type="entry name" value="LARGE RIBOSOMAL SUBUNIT PROTEIN BL33M"/>
    <property type="match status" value="1"/>
</dbReference>
<dbReference type="Pfam" id="PF00471">
    <property type="entry name" value="Ribosomal_L33"/>
    <property type="match status" value="1"/>
</dbReference>
<dbReference type="SUPFAM" id="SSF57829">
    <property type="entry name" value="Zn-binding ribosomal proteins"/>
    <property type="match status" value="1"/>
</dbReference>
<dbReference type="PROSITE" id="PS00582">
    <property type="entry name" value="RIBOSOMAL_L33"/>
    <property type="match status" value="1"/>
</dbReference>
<feature type="chain" id="PRO_1000004136" description="Large ribosomal subunit protein bL33">
    <location>
        <begin position="1"/>
        <end position="55"/>
    </location>
</feature>
<gene>
    <name evidence="1" type="primary">rpmG</name>
    <name type="ordered locus">AHA_0162</name>
</gene>
<comment type="similarity">
    <text evidence="1">Belongs to the bacterial ribosomal protein bL33 family.</text>
</comment>
<accession>A0KEN0</accession>
<evidence type="ECO:0000255" key="1">
    <source>
        <dbReference type="HAMAP-Rule" id="MF_00294"/>
    </source>
</evidence>
<evidence type="ECO:0000305" key="2"/>
<sequence length="55" mass="6422">MAKGIREKIRLNSSAGTGHFYTTTKNKRTMPEKMEIKKFDPVVRQHVIYKEGKIK</sequence>
<organism>
    <name type="scientific">Aeromonas hydrophila subsp. hydrophila (strain ATCC 7966 / DSM 30187 / BCRC 13018 / CCUG 14551 / JCM 1027 / KCTC 2358 / NCIMB 9240 / NCTC 8049)</name>
    <dbReference type="NCBI Taxonomy" id="380703"/>
    <lineage>
        <taxon>Bacteria</taxon>
        <taxon>Pseudomonadati</taxon>
        <taxon>Pseudomonadota</taxon>
        <taxon>Gammaproteobacteria</taxon>
        <taxon>Aeromonadales</taxon>
        <taxon>Aeromonadaceae</taxon>
        <taxon>Aeromonas</taxon>
    </lineage>
</organism>
<protein>
    <recommendedName>
        <fullName evidence="1">Large ribosomal subunit protein bL33</fullName>
    </recommendedName>
    <alternativeName>
        <fullName evidence="2">50S ribosomal protein L33</fullName>
    </alternativeName>
</protein>